<organism>
    <name type="scientific">Aquifex aeolicus (strain VF5)</name>
    <dbReference type="NCBI Taxonomy" id="224324"/>
    <lineage>
        <taxon>Bacteria</taxon>
        <taxon>Pseudomonadati</taxon>
        <taxon>Aquificota</taxon>
        <taxon>Aquificia</taxon>
        <taxon>Aquificales</taxon>
        <taxon>Aquificaceae</taxon>
        <taxon>Aquifex</taxon>
    </lineage>
</organism>
<feature type="chain" id="PRO_0000110244" description="Uncharacterized MscS family protein aq_812">
    <location>
        <begin position="1"/>
        <end position="368"/>
    </location>
</feature>
<feature type="transmembrane region" description="Helical" evidence="1">
    <location>
        <begin position="22"/>
        <end position="42"/>
    </location>
</feature>
<feature type="transmembrane region" description="Helical" evidence="1">
    <location>
        <begin position="74"/>
        <end position="94"/>
    </location>
</feature>
<feature type="transmembrane region" description="Helical" evidence="1">
    <location>
        <begin position="104"/>
        <end position="124"/>
    </location>
</feature>
<feature type="transmembrane region" description="Helical" evidence="1">
    <location>
        <begin position="144"/>
        <end position="164"/>
    </location>
</feature>
<feature type="transmembrane region" description="Helical" evidence="1">
    <location>
        <begin position="168"/>
        <end position="188"/>
    </location>
</feature>
<dbReference type="EMBL" id="AE000657">
    <property type="protein sequence ID" value="AAC06958.1"/>
    <property type="molecule type" value="Genomic_DNA"/>
</dbReference>
<dbReference type="PIR" id="G70370">
    <property type="entry name" value="G70370"/>
</dbReference>
<dbReference type="RefSeq" id="NP_213555.1">
    <property type="nucleotide sequence ID" value="NC_000918.1"/>
</dbReference>
<dbReference type="RefSeq" id="WP_010880493.1">
    <property type="nucleotide sequence ID" value="NC_000918.1"/>
</dbReference>
<dbReference type="SMR" id="O66994"/>
<dbReference type="FunCoup" id="O66994">
    <property type="interactions" value="129"/>
</dbReference>
<dbReference type="STRING" id="224324.aq_812"/>
<dbReference type="EnsemblBacteria" id="AAC06958">
    <property type="protein sequence ID" value="AAC06958"/>
    <property type="gene ID" value="aq_812"/>
</dbReference>
<dbReference type="KEGG" id="aae:aq_812"/>
<dbReference type="PATRIC" id="fig|224324.8.peg.640"/>
<dbReference type="eggNOG" id="COG0668">
    <property type="taxonomic scope" value="Bacteria"/>
</dbReference>
<dbReference type="HOGENOM" id="CLU_037945_0_4_0"/>
<dbReference type="InParanoid" id="O66994"/>
<dbReference type="OrthoDB" id="9809206at2"/>
<dbReference type="Proteomes" id="UP000000798">
    <property type="component" value="Chromosome"/>
</dbReference>
<dbReference type="GO" id="GO:0005886">
    <property type="term" value="C:plasma membrane"/>
    <property type="evidence" value="ECO:0007669"/>
    <property type="project" value="UniProtKB-SubCell"/>
</dbReference>
<dbReference type="GO" id="GO:0055085">
    <property type="term" value="P:transmembrane transport"/>
    <property type="evidence" value="ECO:0007669"/>
    <property type="project" value="InterPro"/>
</dbReference>
<dbReference type="Gene3D" id="1.10.287.1260">
    <property type="match status" value="1"/>
</dbReference>
<dbReference type="Gene3D" id="2.30.30.60">
    <property type="match status" value="1"/>
</dbReference>
<dbReference type="Gene3D" id="3.30.70.100">
    <property type="match status" value="1"/>
</dbReference>
<dbReference type="InterPro" id="IPR010920">
    <property type="entry name" value="LSM_dom_sf"/>
</dbReference>
<dbReference type="InterPro" id="IPR049142">
    <property type="entry name" value="MS_channel_1st"/>
</dbReference>
<dbReference type="InterPro" id="IPR049278">
    <property type="entry name" value="MS_channel_C"/>
</dbReference>
<dbReference type="InterPro" id="IPR023408">
    <property type="entry name" value="MscS_beta-dom_sf"/>
</dbReference>
<dbReference type="InterPro" id="IPR006685">
    <property type="entry name" value="MscS_channel_2nd"/>
</dbReference>
<dbReference type="InterPro" id="IPR011066">
    <property type="entry name" value="MscS_channel_C_sf"/>
</dbReference>
<dbReference type="InterPro" id="IPR006686">
    <property type="entry name" value="MscS_channel_CS"/>
</dbReference>
<dbReference type="InterPro" id="IPR011014">
    <property type="entry name" value="MscS_channel_TM-2"/>
</dbReference>
<dbReference type="InterPro" id="IPR045042">
    <property type="entry name" value="YnaI-like"/>
</dbReference>
<dbReference type="PANTHER" id="PTHR43634:SF2">
    <property type="entry name" value="LOW CONDUCTANCE MECHANOSENSITIVE CHANNEL YNAI"/>
    <property type="match status" value="1"/>
</dbReference>
<dbReference type="PANTHER" id="PTHR43634">
    <property type="entry name" value="OW CONDUCTANCE MECHANOSENSITIVE CHANNEL"/>
    <property type="match status" value="1"/>
</dbReference>
<dbReference type="Pfam" id="PF21088">
    <property type="entry name" value="MS_channel_1st"/>
    <property type="match status" value="1"/>
</dbReference>
<dbReference type="Pfam" id="PF00924">
    <property type="entry name" value="MS_channel_2nd"/>
    <property type="match status" value="1"/>
</dbReference>
<dbReference type="Pfam" id="PF21082">
    <property type="entry name" value="MS_channel_3rd"/>
    <property type="match status" value="1"/>
</dbReference>
<dbReference type="SUPFAM" id="SSF82689">
    <property type="entry name" value="Mechanosensitive channel protein MscS (YggB), C-terminal domain"/>
    <property type="match status" value="1"/>
</dbReference>
<dbReference type="SUPFAM" id="SSF82861">
    <property type="entry name" value="Mechanosensitive channel protein MscS (YggB), transmembrane region"/>
    <property type="match status" value="1"/>
</dbReference>
<dbReference type="SUPFAM" id="SSF50182">
    <property type="entry name" value="Sm-like ribonucleoproteins"/>
    <property type="match status" value="1"/>
</dbReference>
<dbReference type="PROSITE" id="PS01246">
    <property type="entry name" value="UPF0003"/>
    <property type="match status" value="1"/>
</dbReference>
<keyword id="KW-1003">Cell membrane</keyword>
<keyword id="KW-0472">Membrane</keyword>
<keyword id="KW-1185">Reference proteome</keyword>
<keyword id="KW-0812">Transmembrane</keyword>
<keyword id="KW-1133">Transmembrane helix</keyword>
<comment type="subcellular location">
    <subcellularLocation>
        <location evidence="2">Cell membrane</location>
        <topology evidence="2">Multi-pass membrane protein</topology>
    </subcellularLocation>
</comment>
<comment type="similarity">
    <text evidence="2">Belongs to the MscS (TC 1.A.23) family.</text>
</comment>
<reference key="1">
    <citation type="journal article" date="1998" name="Nature">
        <title>The complete genome of the hyperthermophilic bacterium Aquifex aeolicus.</title>
        <authorList>
            <person name="Deckert G."/>
            <person name="Warren P.V."/>
            <person name="Gaasterland T."/>
            <person name="Young W.G."/>
            <person name="Lenox A.L."/>
            <person name="Graham D.E."/>
            <person name="Overbeek R."/>
            <person name="Snead M.A."/>
            <person name="Keller M."/>
            <person name="Aujay M."/>
            <person name="Huber R."/>
            <person name="Feldman R.A."/>
            <person name="Short J.M."/>
            <person name="Olsen G.J."/>
            <person name="Swanson R.V."/>
        </authorList>
    </citation>
    <scope>NUCLEOTIDE SEQUENCE [LARGE SCALE GENOMIC DNA]</scope>
    <source>
        <strain>VF5</strain>
    </source>
</reference>
<proteinExistence type="inferred from homology"/>
<protein>
    <recommendedName>
        <fullName>Uncharacterized MscS family protein aq_812</fullName>
    </recommendedName>
</protein>
<gene>
    <name type="ordered locus">aq_812</name>
</gene>
<sequence length="368" mass="42178">MEEILIWIKKLEKYLYALNAKVAGIPLYKIIIASAIMLFTLILRRLIAFLIVKILTKLTIRTKTDVDELIVKAFVKPFSYFIVVFGFYLSLLVLEVPKVYADKFLKTFSLLILGWAIIRFLNLFHNKIVEFFVKVGGKDFAEEVGDFILKILKAFVVVIVGASLLQEWGVNIGAILASVGLLGLAVSLAAKDTFENILSGLIILLDKPVKVGETVKVKDFMGSVEDIGLRSTKIRTFDKSLVTIPNRDIVNNHVENFTRRNKRRVRFYIGVVYSTKREQLENILKEIRELLKEHPGVAKDEKFYVYFENYGDSSLNILIQYYANTNDYEEYLKIIEDINLKIMEIVEKNGSSFAFPSRSVYIEKMPKS</sequence>
<evidence type="ECO:0000255" key="1"/>
<evidence type="ECO:0000305" key="2"/>
<name>Y812_AQUAE</name>
<accession>O66994</accession>